<organism>
    <name type="scientific">Ehrlichia chaffeensis (strain ATCC CRL-10679 / Arkansas)</name>
    <dbReference type="NCBI Taxonomy" id="205920"/>
    <lineage>
        <taxon>Bacteria</taxon>
        <taxon>Pseudomonadati</taxon>
        <taxon>Pseudomonadota</taxon>
        <taxon>Alphaproteobacteria</taxon>
        <taxon>Rickettsiales</taxon>
        <taxon>Anaplasmataceae</taxon>
        <taxon>Ehrlichia</taxon>
    </lineage>
</organism>
<dbReference type="EC" id="6.1.1.19" evidence="1"/>
<dbReference type="EMBL" id="CP000236">
    <property type="protein sequence ID" value="ABD44762.1"/>
    <property type="molecule type" value="Genomic_DNA"/>
</dbReference>
<dbReference type="RefSeq" id="WP_011452663.1">
    <property type="nucleotide sequence ID" value="NC_007799.1"/>
</dbReference>
<dbReference type="SMR" id="Q2GGT3"/>
<dbReference type="STRING" id="205920.ECH_0537"/>
<dbReference type="KEGG" id="ech:ECH_0537"/>
<dbReference type="eggNOG" id="COG0018">
    <property type="taxonomic scope" value="Bacteria"/>
</dbReference>
<dbReference type="HOGENOM" id="CLU_006406_0_1_5"/>
<dbReference type="OrthoDB" id="9803211at2"/>
<dbReference type="Proteomes" id="UP000008320">
    <property type="component" value="Chromosome"/>
</dbReference>
<dbReference type="GO" id="GO:0005737">
    <property type="term" value="C:cytoplasm"/>
    <property type="evidence" value="ECO:0007669"/>
    <property type="project" value="UniProtKB-SubCell"/>
</dbReference>
<dbReference type="GO" id="GO:0004814">
    <property type="term" value="F:arginine-tRNA ligase activity"/>
    <property type="evidence" value="ECO:0007669"/>
    <property type="project" value="UniProtKB-UniRule"/>
</dbReference>
<dbReference type="GO" id="GO:0005524">
    <property type="term" value="F:ATP binding"/>
    <property type="evidence" value="ECO:0007669"/>
    <property type="project" value="UniProtKB-UniRule"/>
</dbReference>
<dbReference type="GO" id="GO:0006420">
    <property type="term" value="P:arginyl-tRNA aminoacylation"/>
    <property type="evidence" value="ECO:0007669"/>
    <property type="project" value="UniProtKB-UniRule"/>
</dbReference>
<dbReference type="CDD" id="cd00671">
    <property type="entry name" value="ArgRS_core"/>
    <property type="match status" value="1"/>
</dbReference>
<dbReference type="Gene3D" id="3.30.1360.70">
    <property type="entry name" value="Arginyl tRNA synthetase N-terminal domain"/>
    <property type="match status" value="1"/>
</dbReference>
<dbReference type="Gene3D" id="3.40.50.620">
    <property type="entry name" value="HUPs"/>
    <property type="match status" value="1"/>
</dbReference>
<dbReference type="Gene3D" id="1.10.730.10">
    <property type="entry name" value="Isoleucyl-tRNA Synthetase, Domain 1"/>
    <property type="match status" value="1"/>
</dbReference>
<dbReference type="HAMAP" id="MF_00123">
    <property type="entry name" value="Arg_tRNA_synth"/>
    <property type="match status" value="1"/>
</dbReference>
<dbReference type="InterPro" id="IPR001412">
    <property type="entry name" value="aa-tRNA-synth_I_CS"/>
</dbReference>
<dbReference type="InterPro" id="IPR001278">
    <property type="entry name" value="Arg-tRNA-ligase"/>
</dbReference>
<dbReference type="InterPro" id="IPR005148">
    <property type="entry name" value="Arg-tRNA-synth_N"/>
</dbReference>
<dbReference type="InterPro" id="IPR036695">
    <property type="entry name" value="Arg-tRNA-synth_N_sf"/>
</dbReference>
<dbReference type="InterPro" id="IPR035684">
    <property type="entry name" value="ArgRS_core"/>
</dbReference>
<dbReference type="InterPro" id="IPR008909">
    <property type="entry name" value="DALR_anticod-bd"/>
</dbReference>
<dbReference type="InterPro" id="IPR014729">
    <property type="entry name" value="Rossmann-like_a/b/a_fold"/>
</dbReference>
<dbReference type="InterPro" id="IPR009080">
    <property type="entry name" value="tRNAsynth_Ia_anticodon-bd"/>
</dbReference>
<dbReference type="NCBIfam" id="TIGR00456">
    <property type="entry name" value="argS"/>
    <property type="match status" value="1"/>
</dbReference>
<dbReference type="PANTHER" id="PTHR11956:SF5">
    <property type="entry name" value="ARGININE--TRNA LIGASE, CYTOPLASMIC"/>
    <property type="match status" value="1"/>
</dbReference>
<dbReference type="PANTHER" id="PTHR11956">
    <property type="entry name" value="ARGINYL-TRNA SYNTHETASE"/>
    <property type="match status" value="1"/>
</dbReference>
<dbReference type="Pfam" id="PF03485">
    <property type="entry name" value="Arg_tRNA_synt_N"/>
    <property type="match status" value="1"/>
</dbReference>
<dbReference type="Pfam" id="PF05746">
    <property type="entry name" value="DALR_1"/>
    <property type="match status" value="1"/>
</dbReference>
<dbReference type="Pfam" id="PF00750">
    <property type="entry name" value="tRNA-synt_1d"/>
    <property type="match status" value="1"/>
</dbReference>
<dbReference type="PRINTS" id="PR01038">
    <property type="entry name" value="TRNASYNTHARG"/>
</dbReference>
<dbReference type="SMART" id="SM01016">
    <property type="entry name" value="Arg_tRNA_synt_N"/>
    <property type="match status" value="1"/>
</dbReference>
<dbReference type="SMART" id="SM00836">
    <property type="entry name" value="DALR_1"/>
    <property type="match status" value="1"/>
</dbReference>
<dbReference type="SUPFAM" id="SSF47323">
    <property type="entry name" value="Anticodon-binding domain of a subclass of class I aminoacyl-tRNA synthetases"/>
    <property type="match status" value="1"/>
</dbReference>
<dbReference type="SUPFAM" id="SSF55190">
    <property type="entry name" value="Arginyl-tRNA synthetase (ArgRS), N-terminal 'additional' domain"/>
    <property type="match status" value="1"/>
</dbReference>
<dbReference type="SUPFAM" id="SSF52374">
    <property type="entry name" value="Nucleotidylyl transferase"/>
    <property type="match status" value="1"/>
</dbReference>
<dbReference type="PROSITE" id="PS00178">
    <property type="entry name" value="AA_TRNA_LIGASE_I"/>
    <property type="match status" value="1"/>
</dbReference>
<sequence length="576" mass="65309">MNLINTVKNCIVEKLHILSDKKLIVLDDVILSKLIVDYPNNHNHGDLYTNAALILSSHIKKSPLEIAEILLSEFSNIKEISSINVVKPGFINFSISLYVWYEVVASINMLKEGFANVNIGNGQKVNVEFVSANPTGPMHIGHARGAIFGDVLANLLEKVGYQVVREYYINDAGTQIDVLVESVYLRYKEATGQDIVIGSGLYPGLYLREIGKLLYEKYGTDLLEMSFVRKMKIIRDVSLEYLMNLIKEDLALLGIEHDVFTSEAELLKNNIVEKCVKLLEDKQLIYYGVLEQPKGTEMQNWKPRTQMLFKSTDFGDDVDRALQKVDGSWTYFANDIAYHFDKISRGFQHMILELGSDHIGYVKRLKAAVKALSNNNATVDIKLHNTVNFLDDGVQVKMSKRSGEFLTIRDVIEKVGKDVVRFMMLTRKSDVVLDFDFAKVVEQSKNNPIFYVQYAHARVCSLMRNAPNILGIEDTDFSVLSSKEEILLIKLLAKWPNVVEMSAKTAEPHRITFYLIEVAEAFHVLWGYGNKNANRRFIIDNDVNLTSARIYLAKSVAYIISSGLKIFSIVPLEEMH</sequence>
<keyword id="KW-0030">Aminoacyl-tRNA synthetase</keyword>
<keyword id="KW-0067">ATP-binding</keyword>
<keyword id="KW-0963">Cytoplasm</keyword>
<keyword id="KW-0436">Ligase</keyword>
<keyword id="KW-0547">Nucleotide-binding</keyword>
<keyword id="KW-0648">Protein biosynthesis</keyword>
<keyword id="KW-1185">Reference proteome</keyword>
<comment type="catalytic activity">
    <reaction evidence="1">
        <text>tRNA(Arg) + L-arginine + ATP = L-arginyl-tRNA(Arg) + AMP + diphosphate</text>
        <dbReference type="Rhea" id="RHEA:20301"/>
        <dbReference type="Rhea" id="RHEA-COMP:9658"/>
        <dbReference type="Rhea" id="RHEA-COMP:9673"/>
        <dbReference type="ChEBI" id="CHEBI:30616"/>
        <dbReference type="ChEBI" id="CHEBI:32682"/>
        <dbReference type="ChEBI" id="CHEBI:33019"/>
        <dbReference type="ChEBI" id="CHEBI:78442"/>
        <dbReference type="ChEBI" id="CHEBI:78513"/>
        <dbReference type="ChEBI" id="CHEBI:456215"/>
        <dbReference type="EC" id="6.1.1.19"/>
    </reaction>
</comment>
<comment type="subunit">
    <text evidence="1">Monomer.</text>
</comment>
<comment type="subcellular location">
    <subcellularLocation>
        <location evidence="1">Cytoplasm</location>
    </subcellularLocation>
</comment>
<comment type="similarity">
    <text evidence="1">Belongs to the class-I aminoacyl-tRNA synthetase family.</text>
</comment>
<gene>
    <name evidence="1" type="primary">argS</name>
    <name type="ordered locus">ECH_0537</name>
</gene>
<name>SYR_EHRCR</name>
<feature type="chain" id="PRO_0000242018" description="Arginine--tRNA ligase">
    <location>
        <begin position="1"/>
        <end position="576"/>
    </location>
</feature>
<feature type="short sequence motif" description="'HIGH' region">
    <location>
        <begin position="132"/>
        <end position="142"/>
    </location>
</feature>
<protein>
    <recommendedName>
        <fullName evidence="1">Arginine--tRNA ligase</fullName>
        <ecNumber evidence="1">6.1.1.19</ecNumber>
    </recommendedName>
    <alternativeName>
        <fullName evidence="1">Arginyl-tRNA synthetase</fullName>
        <shortName evidence="1">ArgRS</shortName>
    </alternativeName>
</protein>
<accession>Q2GGT3</accession>
<evidence type="ECO:0000255" key="1">
    <source>
        <dbReference type="HAMAP-Rule" id="MF_00123"/>
    </source>
</evidence>
<proteinExistence type="inferred from homology"/>
<reference key="1">
    <citation type="journal article" date="2006" name="PLoS Genet.">
        <title>Comparative genomics of emerging human ehrlichiosis agents.</title>
        <authorList>
            <person name="Dunning Hotopp J.C."/>
            <person name="Lin M."/>
            <person name="Madupu R."/>
            <person name="Crabtree J."/>
            <person name="Angiuoli S.V."/>
            <person name="Eisen J.A."/>
            <person name="Seshadri R."/>
            <person name="Ren Q."/>
            <person name="Wu M."/>
            <person name="Utterback T.R."/>
            <person name="Smith S."/>
            <person name="Lewis M."/>
            <person name="Khouri H."/>
            <person name="Zhang C."/>
            <person name="Niu H."/>
            <person name="Lin Q."/>
            <person name="Ohashi N."/>
            <person name="Zhi N."/>
            <person name="Nelson W.C."/>
            <person name="Brinkac L.M."/>
            <person name="Dodson R.J."/>
            <person name="Rosovitz M.J."/>
            <person name="Sundaram J.P."/>
            <person name="Daugherty S.C."/>
            <person name="Davidsen T."/>
            <person name="Durkin A.S."/>
            <person name="Gwinn M.L."/>
            <person name="Haft D.H."/>
            <person name="Selengut J.D."/>
            <person name="Sullivan S.A."/>
            <person name="Zafar N."/>
            <person name="Zhou L."/>
            <person name="Benahmed F."/>
            <person name="Forberger H."/>
            <person name="Halpin R."/>
            <person name="Mulligan S."/>
            <person name="Robinson J."/>
            <person name="White O."/>
            <person name="Rikihisa Y."/>
            <person name="Tettelin H."/>
        </authorList>
    </citation>
    <scope>NUCLEOTIDE SEQUENCE [LARGE SCALE GENOMIC DNA]</scope>
    <source>
        <strain>ATCC CRL-10679 / Arkansas</strain>
    </source>
</reference>